<feature type="chain" id="PRO_1000133549" description="Small ribosomal subunit protein bS6">
    <location>
        <begin position="1"/>
        <end position="96"/>
    </location>
</feature>
<comment type="function">
    <text evidence="1">Binds together with bS18 to 16S ribosomal RNA.</text>
</comment>
<comment type="similarity">
    <text evidence="1">Belongs to the bacterial ribosomal protein bS6 family.</text>
</comment>
<accession>C1CFC2</accession>
<protein>
    <recommendedName>
        <fullName evidence="1">Small ribosomal subunit protein bS6</fullName>
    </recommendedName>
    <alternativeName>
        <fullName evidence="2">30S ribosomal protein S6</fullName>
    </alternativeName>
</protein>
<organism>
    <name type="scientific">Streptococcus pneumoniae (strain JJA)</name>
    <dbReference type="NCBI Taxonomy" id="488222"/>
    <lineage>
        <taxon>Bacteria</taxon>
        <taxon>Bacillati</taxon>
        <taxon>Bacillota</taxon>
        <taxon>Bacilli</taxon>
        <taxon>Lactobacillales</taxon>
        <taxon>Streptococcaceae</taxon>
        <taxon>Streptococcus</taxon>
    </lineage>
</organism>
<dbReference type="EMBL" id="CP000919">
    <property type="protein sequence ID" value="ACO18303.1"/>
    <property type="molecule type" value="Genomic_DNA"/>
</dbReference>
<dbReference type="RefSeq" id="WP_001151785.1">
    <property type="nucleotide sequence ID" value="NC_012466.1"/>
</dbReference>
<dbReference type="SMR" id="C1CFC2"/>
<dbReference type="GeneID" id="45653220"/>
<dbReference type="KEGG" id="sjj:SPJ_1445"/>
<dbReference type="HOGENOM" id="CLU_113441_5_3_9"/>
<dbReference type="Proteomes" id="UP000002206">
    <property type="component" value="Chromosome"/>
</dbReference>
<dbReference type="GO" id="GO:0005737">
    <property type="term" value="C:cytoplasm"/>
    <property type="evidence" value="ECO:0007669"/>
    <property type="project" value="UniProtKB-ARBA"/>
</dbReference>
<dbReference type="GO" id="GO:1990904">
    <property type="term" value="C:ribonucleoprotein complex"/>
    <property type="evidence" value="ECO:0007669"/>
    <property type="project" value="UniProtKB-KW"/>
</dbReference>
<dbReference type="GO" id="GO:0005840">
    <property type="term" value="C:ribosome"/>
    <property type="evidence" value="ECO:0007669"/>
    <property type="project" value="UniProtKB-KW"/>
</dbReference>
<dbReference type="GO" id="GO:0070181">
    <property type="term" value="F:small ribosomal subunit rRNA binding"/>
    <property type="evidence" value="ECO:0007669"/>
    <property type="project" value="TreeGrafter"/>
</dbReference>
<dbReference type="GO" id="GO:0003735">
    <property type="term" value="F:structural constituent of ribosome"/>
    <property type="evidence" value="ECO:0007669"/>
    <property type="project" value="InterPro"/>
</dbReference>
<dbReference type="GO" id="GO:0006412">
    <property type="term" value="P:translation"/>
    <property type="evidence" value="ECO:0007669"/>
    <property type="project" value="UniProtKB-UniRule"/>
</dbReference>
<dbReference type="CDD" id="cd00473">
    <property type="entry name" value="bS6"/>
    <property type="match status" value="1"/>
</dbReference>
<dbReference type="FunFam" id="3.30.70.60:FF:000002">
    <property type="entry name" value="30S ribosomal protein S6"/>
    <property type="match status" value="1"/>
</dbReference>
<dbReference type="Gene3D" id="3.30.70.60">
    <property type="match status" value="1"/>
</dbReference>
<dbReference type="HAMAP" id="MF_00360">
    <property type="entry name" value="Ribosomal_bS6"/>
    <property type="match status" value="1"/>
</dbReference>
<dbReference type="InterPro" id="IPR000529">
    <property type="entry name" value="Ribosomal_bS6"/>
</dbReference>
<dbReference type="InterPro" id="IPR035980">
    <property type="entry name" value="Ribosomal_bS6_sf"/>
</dbReference>
<dbReference type="InterPro" id="IPR020814">
    <property type="entry name" value="Ribosomal_S6_plastid/chlpt"/>
</dbReference>
<dbReference type="InterPro" id="IPR014717">
    <property type="entry name" value="Transl_elong_EF1B/ribsomal_bS6"/>
</dbReference>
<dbReference type="NCBIfam" id="TIGR00166">
    <property type="entry name" value="S6"/>
    <property type="match status" value="1"/>
</dbReference>
<dbReference type="PANTHER" id="PTHR21011">
    <property type="entry name" value="MITOCHONDRIAL 28S RIBOSOMAL PROTEIN S6"/>
    <property type="match status" value="1"/>
</dbReference>
<dbReference type="PANTHER" id="PTHR21011:SF1">
    <property type="entry name" value="SMALL RIBOSOMAL SUBUNIT PROTEIN BS6M"/>
    <property type="match status" value="1"/>
</dbReference>
<dbReference type="Pfam" id="PF01250">
    <property type="entry name" value="Ribosomal_S6"/>
    <property type="match status" value="1"/>
</dbReference>
<dbReference type="SUPFAM" id="SSF54995">
    <property type="entry name" value="Ribosomal protein S6"/>
    <property type="match status" value="1"/>
</dbReference>
<name>RS6_STRZJ</name>
<gene>
    <name evidence="1" type="primary">rpsF</name>
    <name type="ordered locus">SPJ_1445</name>
</gene>
<evidence type="ECO:0000255" key="1">
    <source>
        <dbReference type="HAMAP-Rule" id="MF_00360"/>
    </source>
</evidence>
<evidence type="ECO:0000305" key="2"/>
<proteinExistence type="inferred from homology"/>
<sequence>MAKYEILYIIRPNIEEEAKNALVARFDSILTDNGATVVESKTWEKRRLAYEIQDFREGLYHIVNVEANDDAALKEFDRLSKINADILRHMIVKIDA</sequence>
<keyword id="KW-0687">Ribonucleoprotein</keyword>
<keyword id="KW-0689">Ribosomal protein</keyword>
<keyword id="KW-0694">RNA-binding</keyword>
<keyword id="KW-0699">rRNA-binding</keyword>
<reference key="1">
    <citation type="journal article" date="2010" name="Genome Biol.">
        <title>Structure and dynamics of the pan-genome of Streptococcus pneumoniae and closely related species.</title>
        <authorList>
            <person name="Donati C."/>
            <person name="Hiller N.L."/>
            <person name="Tettelin H."/>
            <person name="Muzzi A."/>
            <person name="Croucher N.J."/>
            <person name="Angiuoli S.V."/>
            <person name="Oggioni M."/>
            <person name="Dunning Hotopp J.C."/>
            <person name="Hu F.Z."/>
            <person name="Riley D.R."/>
            <person name="Covacci A."/>
            <person name="Mitchell T.J."/>
            <person name="Bentley S.D."/>
            <person name="Kilian M."/>
            <person name="Ehrlich G.D."/>
            <person name="Rappuoli R."/>
            <person name="Moxon E.R."/>
            <person name="Masignani V."/>
        </authorList>
    </citation>
    <scope>NUCLEOTIDE SEQUENCE [LARGE SCALE GENOMIC DNA]</scope>
    <source>
        <strain>JJA</strain>
    </source>
</reference>